<reference key="1">
    <citation type="journal article" date="2009" name="J. Bacteriol.">
        <title>Genome sequences of three Agrobacterium biovars help elucidate the evolution of multichromosome genomes in bacteria.</title>
        <authorList>
            <person name="Slater S.C."/>
            <person name="Goldman B.S."/>
            <person name="Goodner B."/>
            <person name="Setubal J.C."/>
            <person name="Farrand S.K."/>
            <person name="Nester E.W."/>
            <person name="Burr T.J."/>
            <person name="Banta L."/>
            <person name="Dickerman A.W."/>
            <person name="Paulsen I."/>
            <person name="Otten L."/>
            <person name="Suen G."/>
            <person name="Welch R."/>
            <person name="Almeida N.F."/>
            <person name="Arnold F."/>
            <person name="Burton O.T."/>
            <person name="Du Z."/>
            <person name="Ewing A."/>
            <person name="Godsy E."/>
            <person name="Heisel S."/>
            <person name="Houmiel K.L."/>
            <person name="Jhaveri J."/>
            <person name="Lu J."/>
            <person name="Miller N.M."/>
            <person name="Norton S."/>
            <person name="Chen Q."/>
            <person name="Phoolcharoen W."/>
            <person name="Ohlin V."/>
            <person name="Ondrusek D."/>
            <person name="Pride N."/>
            <person name="Stricklin S.L."/>
            <person name="Sun J."/>
            <person name="Wheeler C."/>
            <person name="Wilson L."/>
            <person name="Zhu H."/>
            <person name="Wood D.W."/>
        </authorList>
    </citation>
    <scope>NUCLEOTIDE SEQUENCE [LARGE SCALE GENOMIC DNA]</scope>
    <source>
        <strain>ATCC BAA-846 / DSM 112012 / S4</strain>
    </source>
</reference>
<proteinExistence type="inferred from homology"/>
<sequence length="954" mass="103381">MTTPTEFQFTDYQPYDFANRRHIGPSPAEMDEMLKTVGYDSLDGLIAATVPASIRQSAPLVWGKAMSEREALDKLRETANKNKALTSLIGQGYYGTITPPVIQRNILENPAWYTAYTPYQPEISQGRLEALLNFQTMICDLTGLDVANASLLDEATAAAEAMAMAERVAKSKAKAFFVDSNCHPQTIAVIQTRAEPLGWGVVVGNPFTDLNPGEVFGALFQYPGTHGHVSDFTPLINALHNAQAIAAVAADPLALLLLKSPGEMGADIAIGSSQRFGVPVGYGGPHAAYMAVKDAIKRSMPGRLVGVSVDSRGNRAYRLSLQTREQHIRREKATSNICTAQVLLAVMASMYAVFHGPQGLKAIAQQVHQKTVLLAKGLEKLGFTIEPETFFDTITLEVGHMQGLILRAAVAEGVNLRKVGTTKIGISLDERTRPATLEAVWRAFGGNFAVGDFTPDYRLPTSLLRTSQYLTHPIFHMNRAESEMTRYIRRLSDRDLALDRAMIPLGSCTMKLNATAEMLPITWPEFSDIHPFAPADQALGYQEMIDDLSEKLCAVTGYDAISMQPNSGAQGEYAGLLTIRNYHLAKGDTHRTVCLIPTSAHGTNPASAQMAGMLVVPVKALDNGDVDLADFRTKAEQHSTNLSCCMITYPSTHGVFEETVREICEITHAHGGQVYLDGANMNAMVGIARPGDIGSDVSHLNLHKTFCIPHGGGGPGMGPIGVKAHLTPYLPGHVETDGRPGAVSAAPYGSPSILPISWSYCLMMGGEGLTQATKVAILNANYIAARLTGAYDVLYTSASGRVAHECIIDTRPLADSAGVTVDDVAKRLIDCGFHAPTMSWPVAGTLMIEPTESETKAELDRFCTAMLAIREEARAIEDGRMDKTNNPLKNAPHTVEDLVGEWDRPYSRDQACYPPGAFRVDKYWSSVNRVDNVYGDRNLVCTCPPMSEYAEAAE</sequence>
<keyword id="KW-0560">Oxidoreductase</keyword>
<keyword id="KW-0663">Pyridoxal phosphate</keyword>
<keyword id="KW-1185">Reference proteome</keyword>
<organism>
    <name type="scientific">Allorhizobium ampelinum (strain ATCC BAA-846 / DSM 112012 / S4)</name>
    <name type="common">Agrobacterium vitis (strain S4)</name>
    <dbReference type="NCBI Taxonomy" id="311402"/>
    <lineage>
        <taxon>Bacteria</taxon>
        <taxon>Pseudomonadati</taxon>
        <taxon>Pseudomonadota</taxon>
        <taxon>Alphaproteobacteria</taxon>
        <taxon>Hyphomicrobiales</taxon>
        <taxon>Rhizobiaceae</taxon>
        <taxon>Rhizobium/Agrobacterium group</taxon>
        <taxon>Allorhizobium</taxon>
        <taxon>Allorhizobium ampelinum</taxon>
    </lineage>
</organism>
<gene>
    <name evidence="1" type="primary">gcvP</name>
    <name type="ordered locus">Avi_2252</name>
</gene>
<name>GCSP_ALLAM</name>
<feature type="chain" id="PRO_1000147961" description="Glycine dehydrogenase (decarboxylating)">
    <location>
        <begin position="1"/>
        <end position="954"/>
    </location>
</feature>
<feature type="modified residue" description="N6-(pyridoxal phosphate)lysine" evidence="1">
    <location>
        <position position="704"/>
    </location>
</feature>
<protein>
    <recommendedName>
        <fullName evidence="1">Glycine dehydrogenase (decarboxylating)</fullName>
        <ecNumber evidence="1">1.4.4.2</ecNumber>
    </recommendedName>
    <alternativeName>
        <fullName evidence="1">Glycine cleavage system P-protein</fullName>
    </alternativeName>
    <alternativeName>
        <fullName evidence="1">Glycine decarboxylase</fullName>
    </alternativeName>
    <alternativeName>
        <fullName evidence="1">Glycine dehydrogenase (aminomethyl-transferring)</fullName>
    </alternativeName>
</protein>
<accession>B9JWI2</accession>
<comment type="function">
    <text evidence="1">The glycine cleavage system catalyzes the degradation of glycine. The P protein binds the alpha-amino group of glycine through its pyridoxal phosphate cofactor; CO(2) is released and the remaining methylamine moiety is then transferred to the lipoamide cofactor of the H protein.</text>
</comment>
<comment type="catalytic activity">
    <reaction evidence="1">
        <text>N(6)-[(R)-lipoyl]-L-lysyl-[glycine-cleavage complex H protein] + glycine + H(+) = N(6)-[(R)-S(8)-aminomethyldihydrolipoyl]-L-lysyl-[glycine-cleavage complex H protein] + CO2</text>
        <dbReference type="Rhea" id="RHEA:24304"/>
        <dbReference type="Rhea" id="RHEA-COMP:10494"/>
        <dbReference type="Rhea" id="RHEA-COMP:10495"/>
        <dbReference type="ChEBI" id="CHEBI:15378"/>
        <dbReference type="ChEBI" id="CHEBI:16526"/>
        <dbReference type="ChEBI" id="CHEBI:57305"/>
        <dbReference type="ChEBI" id="CHEBI:83099"/>
        <dbReference type="ChEBI" id="CHEBI:83143"/>
        <dbReference type="EC" id="1.4.4.2"/>
    </reaction>
</comment>
<comment type="cofactor">
    <cofactor evidence="1">
        <name>pyridoxal 5'-phosphate</name>
        <dbReference type="ChEBI" id="CHEBI:597326"/>
    </cofactor>
</comment>
<comment type="subunit">
    <text evidence="1">The glycine cleavage system is composed of four proteins: P, T, L and H.</text>
</comment>
<comment type="similarity">
    <text evidence="1">Belongs to the GcvP family.</text>
</comment>
<evidence type="ECO:0000255" key="1">
    <source>
        <dbReference type="HAMAP-Rule" id="MF_00711"/>
    </source>
</evidence>
<dbReference type="EC" id="1.4.4.2" evidence="1"/>
<dbReference type="EMBL" id="CP000633">
    <property type="protein sequence ID" value="ACM36610.1"/>
    <property type="molecule type" value="Genomic_DNA"/>
</dbReference>
<dbReference type="RefSeq" id="WP_015916031.1">
    <property type="nucleotide sequence ID" value="NC_011989.1"/>
</dbReference>
<dbReference type="SMR" id="B9JWI2"/>
<dbReference type="STRING" id="311402.Avi_2252"/>
<dbReference type="KEGG" id="avi:Avi_2252"/>
<dbReference type="eggNOG" id="COG0403">
    <property type="taxonomic scope" value="Bacteria"/>
</dbReference>
<dbReference type="eggNOG" id="COG1003">
    <property type="taxonomic scope" value="Bacteria"/>
</dbReference>
<dbReference type="HOGENOM" id="CLU_004620_4_0_5"/>
<dbReference type="Proteomes" id="UP000001596">
    <property type="component" value="Chromosome 1"/>
</dbReference>
<dbReference type="GO" id="GO:0005829">
    <property type="term" value="C:cytosol"/>
    <property type="evidence" value="ECO:0007669"/>
    <property type="project" value="TreeGrafter"/>
</dbReference>
<dbReference type="GO" id="GO:0005960">
    <property type="term" value="C:glycine cleavage complex"/>
    <property type="evidence" value="ECO:0007669"/>
    <property type="project" value="TreeGrafter"/>
</dbReference>
<dbReference type="GO" id="GO:0016594">
    <property type="term" value="F:glycine binding"/>
    <property type="evidence" value="ECO:0007669"/>
    <property type="project" value="TreeGrafter"/>
</dbReference>
<dbReference type="GO" id="GO:0004375">
    <property type="term" value="F:glycine dehydrogenase (decarboxylating) activity"/>
    <property type="evidence" value="ECO:0007669"/>
    <property type="project" value="UniProtKB-EC"/>
</dbReference>
<dbReference type="GO" id="GO:0030170">
    <property type="term" value="F:pyridoxal phosphate binding"/>
    <property type="evidence" value="ECO:0007669"/>
    <property type="project" value="TreeGrafter"/>
</dbReference>
<dbReference type="GO" id="GO:0019464">
    <property type="term" value="P:glycine decarboxylation via glycine cleavage system"/>
    <property type="evidence" value="ECO:0007669"/>
    <property type="project" value="UniProtKB-UniRule"/>
</dbReference>
<dbReference type="CDD" id="cd00613">
    <property type="entry name" value="GDC-P"/>
    <property type="match status" value="2"/>
</dbReference>
<dbReference type="FunFam" id="3.40.640.10:FF:000005">
    <property type="entry name" value="Glycine dehydrogenase (decarboxylating), mitochondrial"/>
    <property type="match status" value="1"/>
</dbReference>
<dbReference type="FunFam" id="3.90.1150.10:FF:000007">
    <property type="entry name" value="Glycine dehydrogenase (decarboxylating), mitochondrial"/>
    <property type="match status" value="1"/>
</dbReference>
<dbReference type="FunFam" id="3.40.640.10:FF:000007">
    <property type="entry name" value="glycine dehydrogenase (Decarboxylating), mitochondrial"/>
    <property type="match status" value="1"/>
</dbReference>
<dbReference type="Gene3D" id="3.90.1150.10">
    <property type="entry name" value="Aspartate Aminotransferase, domain 1"/>
    <property type="match status" value="2"/>
</dbReference>
<dbReference type="Gene3D" id="3.40.640.10">
    <property type="entry name" value="Type I PLP-dependent aspartate aminotransferase-like (Major domain)"/>
    <property type="match status" value="2"/>
</dbReference>
<dbReference type="HAMAP" id="MF_00711">
    <property type="entry name" value="GcvP"/>
    <property type="match status" value="1"/>
</dbReference>
<dbReference type="InterPro" id="IPR003437">
    <property type="entry name" value="GcvP"/>
</dbReference>
<dbReference type="InterPro" id="IPR049316">
    <property type="entry name" value="GDC-P_C"/>
</dbReference>
<dbReference type="InterPro" id="IPR049315">
    <property type="entry name" value="GDC-P_N"/>
</dbReference>
<dbReference type="InterPro" id="IPR020581">
    <property type="entry name" value="GDC_P"/>
</dbReference>
<dbReference type="InterPro" id="IPR015424">
    <property type="entry name" value="PyrdxlP-dep_Trfase"/>
</dbReference>
<dbReference type="InterPro" id="IPR015421">
    <property type="entry name" value="PyrdxlP-dep_Trfase_major"/>
</dbReference>
<dbReference type="InterPro" id="IPR015422">
    <property type="entry name" value="PyrdxlP-dep_Trfase_small"/>
</dbReference>
<dbReference type="NCBIfam" id="TIGR00461">
    <property type="entry name" value="gcvP"/>
    <property type="match status" value="1"/>
</dbReference>
<dbReference type="NCBIfam" id="NF001696">
    <property type="entry name" value="PRK00451.1"/>
    <property type="match status" value="1"/>
</dbReference>
<dbReference type="PANTHER" id="PTHR11773:SF1">
    <property type="entry name" value="GLYCINE DEHYDROGENASE (DECARBOXYLATING), MITOCHONDRIAL"/>
    <property type="match status" value="1"/>
</dbReference>
<dbReference type="PANTHER" id="PTHR11773">
    <property type="entry name" value="GLYCINE DEHYDROGENASE, DECARBOXYLATING"/>
    <property type="match status" value="1"/>
</dbReference>
<dbReference type="Pfam" id="PF21478">
    <property type="entry name" value="GcvP2_C"/>
    <property type="match status" value="1"/>
</dbReference>
<dbReference type="Pfam" id="PF02347">
    <property type="entry name" value="GDC-P"/>
    <property type="match status" value="2"/>
</dbReference>
<dbReference type="SUPFAM" id="SSF53383">
    <property type="entry name" value="PLP-dependent transferases"/>
    <property type="match status" value="2"/>
</dbReference>